<sequence>MKRERGALSRASRALRLSPFVYLLLIQPVPLEGVNITSPVRLIHGTVGKSALLSVQYSSTSSDKPVVKWQLKRDKPVTVVQSIGTEVIGTLRPDYRDRIRLFENGSLLLSDLQLADEGTYEVEISITDDTFTGEKTINLTVDVPISRPQVLVASTTVLELSEAFTLNCSHENGTKPSYTWLKDGKPLLNDSRMLLSPDQKVLTITRVLMEDDDLYSCVVENPISQVRSLPVKITVYRRSSLYIILSTGGIFLLVTLVTVCACWKPSKKSRKKRKLEKQNSLEYMDQNDDRLKSEADTLPRSGEQERKNPMALYILKDKDSSEPDENPATEPRSTTEPGPPGYSVSPPVPGRSPGLPIRSARRYPRSPARSPATGRTHTSPPRAPSSPGRSRSSSRSLRTAGVQRIREQDESGQVEISA</sequence>
<gene>
    <name evidence="9" type="primary">Hepacam</name>
</gene>
<name>HECAM_MOUSE</name>
<comment type="function">
    <text evidence="2 6">Involved in regulating cell motility and cell-matrix interactions. May inhibit cell growth through suppression of cell proliferation (By similarity). In glia, associates and targets CLCN2 at astrocytic processes and myelinated fiber tracts where it may regulate transcellular chloride flux involved in neuron excitability.</text>
</comment>
<comment type="subunit">
    <text evidence="1 6">Homodimer. Dimer formation occurs predominantly through cis interactions on the cell surface (By similarity). Part of a complex containing MLC1, TRPV4, AQP4 and ATP1B1 (By similarity). Interacts with CLCN2.</text>
</comment>
<comment type="subcellular location">
    <subcellularLocation>
        <location>Cytoplasm</location>
    </subcellularLocation>
    <subcellularLocation>
        <location evidence="6">Cell membrane</location>
        <topology evidence="1">Single-pass type I membrane protein</topology>
        <orientation evidence="2">Cytoplasmic side</orientation>
    </subcellularLocation>
    <text evidence="2 6">Colocalizes with CDH1 (By similarity). Colocalizes with CLCN2 at astrocyte end-foot in contact with brain capillaries and other glial cells (PubMed:22405205).</text>
</comment>
<comment type="domain">
    <text evidence="2">The cytoplasmic domain plays an important role in regulation of cell-matrix adhesion and cell motility.</text>
</comment>
<comment type="PTM">
    <text evidence="2">N-glycosylated.</text>
</comment>
<keyword id="KW-0130">Cell adhesion</keyword>
<keyword id="KW-0131">Cell cycle</keyword>
<keyword id="KW-1003">Cell membrane</keyword>
<keyword id="KW-0963">Cytoplasm</keyword>
<keyword id="KW-1015">Disulfide bond</keyword>
<keyword id="KW-0325">Glycoprotein</keyword>
<keyword id="KW-0338">Growth arrest</keyword>
<keyword id="KW-0341">Growth regulation</keyword>
<keyword id="KW-0393">Immunoglobulin domain</keyword>
<keyword id="KW-0472">Membrane</keyword>
<keyword id="KW-0597">Phosphoprotein</keyword>
<keyword id="KW-1185">Reference proteome</keyword>
<keyword id="KW-0732">Signal</keyword>
<keyword id="KW-0812">Transmembrane</keyword>
<keyword id="KW-1133">Transmembrane helix</keyword>
<dbReference type="EMBL" id="AC138284">
    <property type="status" value="NOT_ANNOTATED_CDS"/>
    <property type="molecule type" value="Genomic_DNA"/>
</dbReference>
<dbReference type="EMBL" id="BC082537">
    <property type="protein sequence ID" value="AAH82537.1"/>
    <property type="molecule type" value="mRNA"/>
</dbReference>
<dbReference type="CCDS" id="CCDS22976.1"/>
<dbReference type="RefSeq" id="NP_780398.2">
    <property type="nucleotide sequence ID" value="NM_175189.4"/>
</dbReference>
<dbReference type="SMR" id="Q640R3"/>
<dbReference type="BioGRID" id="215649">
    <property type="interactions" value="3"/>
</dbReference>
<dbReference type="FunCoup" id="Q640R3">
    <property type="interactions" value="51"/>
</dbReference>
<dbReference type="STRING" id="10090.ENSMUSP00000054105"/>
<dbReference type="GlyConnect" id="2372">
    <property type="glycosylation" value="19 N-Linked glycans (2 sites)"/>
</dbReference>
<dbReference type="GlyCosmos" id="Q640R3">
    <property type="glycosylation" value="4 sites, 19 glycans"/>
</dbReference>
<dbReference type="GlyGen" id="Q640R3">
    <property type="glycosylation" value="8 sites, 23 N-linked glycans (4 sites), 1 O-linked glycan (3 sites)"/>
</dbReference>
<dbReference type="iPTMnet" id="Q640R3"/>
<dbReference type="PhosphoSitePlus" id="Q640R3"/>
<dbReference type="SwissPalm" id="Q640R3"/>
<dbReference type="PaxDb" id="10090-ENSMUSP00000054105"/>
<dbReference type="ProteomicsDB" id="270898"/>
<dbReference type="Antibodypedia" id="2574">
    <property type="antibodies" value="191 antibodies from 31 providers"/>
</dbReference>
<dbReference type="DNASU" id="72927"/>
<dbReference type="Ensembl" id="ENSMUST00000051839.9">
    <property type="protein sequence ID" value="ENSMUSP00000054105.8"/>
    <property type="gene ID" value="ENSMUSG00000046240.9"/>
</dbReference>
<dbReference type="GeneID" id="72927"/>
<dbReference type="KEGG" id="mmu:72927"/>
<dbReference type="UCSC" id="uc009our.1">
    <property type="organism name" value="mouse"/>
</dbReference>
<dbReference type="AGR" id="MGI:1920177"/>
<dbReference type="CTD" id="220296"/>
<dbReference type="MGI" id="MGI:1920177">
    <property type="gene designation" value="Hepacam"/>
</dbReference>
<dbReference type="VEuPathDB" id="HostDB:ENSMUSG00000046240"/>
<dbReference type="eggNOG" id="ENOG502QPJB">
    <property type="taxonomic scope" value="Eukaryota"/>
</dbReference>
<dbReference type="GeneTree" id="ENSGT01130000278319"/>
<dbReference type="HOGENOM" id="CLU_058570_1_0_1"/>
<dbReference type="InParanoid" id="Q640R3"/>
<dbReference type="OMA" id="DRKNPMA"/>
<dbReference type="OrthoDB" id="9891523at2759"/>
<dbReference type="PhylomeDB" id="Q640R3"/>
<dbReference type="TreeFam" id="TF331199"/>
<dbReference type="BioGRID-ORCS" id="72927">
    <property type="hits" value="1 hit in 76 CRISPR screens"/>
</dbReference>
<dbReference type="CD-CODE" id="CE726F99">
    <property type="entry name" value="Postsynaptic density"/>
</dbReference>
<dbReference type="ChiTaRS" id="Hepacam">
    <property type="organism name" value="mouse"/>
</dbReference>
<dbReference type="PRO" id="PR:Q640R3"/>
<dbReference type="Proteomes" id="UP000000589">
    <property type="component" value="Chromosome 9"/>
</dbReference>
<dbReference type="RNAct" id="Q640R3">
    <property type="molecule type" value="protein"/>
</dbReference>
<dbReference type="Bgee" id="ENSMUSG00000046240">
    <property type="expression patterns" value="Expressed in lumbar subsegment of spinal cord and 87 other cell types or tissues"/>
</dbReference>
<dbReference type="ExpressionAtlas" id="Q640R3">
    <property type="expression patterns" value="baseline and differential"/>
</dbReference>
<dbReference type="GO" id="GO:0097450">
    <property type="term" value="C:astrocyte end-foot"/>
    <property type="evidence" value="ECO:0007669"/>
    <property type="project" value="Ensembl"/>
</dbReference>
<dbReference type="GO" id="GO:0005911">
    <property type="term" value="C:cell-cell junction"/>
    <property type="evidence" value="ECO:0007669"/>
    <property type="project" value="Ensembl"/>
</dbReference>
<dbReference type="GO" id="GO:0005737">
    <property type="term" value="C:cytoplasm"/>
    <property type="evidence" value="ECO:0007669"/>
    <property type="project" value="UniProtKB-SubCell"/>
</dbReference>
<dbReference type="GO" id="GO:0005886">
    <property type="term" value="C:plasma membrane"/>
    <property type="evidence" value="ECO:0007669"/>
    <property type="project" value="UniProtKB-SubCell"/>
</dbReference>
<dbReference type="GO" id="GO:0007155">
    <property type="term" value="P:cell adhesion"/>
    <property type="evidence" value="ECO:0007669"/>
    <property type="project" value="UniProtKB-KW"/>
</dbReference>
<dbReference type="GO" id="GO:0150105">
    <property type="term" value="P:protein localization to cell-cell junction"/>
    <property type="evidence" value="ECO:0007669"/>
    <property type="project" value="Ensembl"/>
</dbReference>
<dbReference type="GO" id="GO:0051726">
    <property type="term" value="P:regulation of cell cycle"/>
    <property type="evidence" value="ECO:0007669"/>
    <property type="project" value="UniProtKB-KW"/>
</dbReference>
<dbReference type="FunFam" id="2.60.40.10:FF:000922">
    <property type="entry name" value="hepatocyte cell adhesion molecule isoform X1"/>
    <property type="match status" value="1"/>
</dbReference>
<dbReference type="FunFam" id="2.60.40.10:FF:000786">
    <property type="entry name" value="hepatocyte cell adhesion molecule isoform X2"/>
    <property type="match status" value="1"/>
</dbReference>
<dbReference type="Gene3D" id="2.60.40.10">
    <property type="entry name" value="Immunoglobulins"/>
    <property type="match status" value="2"/>
</dbReference>
<dbReference type="InterPro" id="IPR052280">
    <property type="entry name" value="HEPACAM_domain"/>
</dbReference>
<dbReference type="InterPro" id="IPR007110">
    <property type="entry name" value="Ig-like_dom"/>
</dbReference>
<dbReference type="InterPro" id="IPR036179">
    <property type="entry name" value="Ig-like_dom_sf"/>
</dbReference>
<dbReference type="InterPro" id="IPR013783">
    <property type="entry name" value="Ig-like_fold"/>
</dbReference>
<dbReference type="InterPro" id="IPR003599">
    <property type="entry name" value="Ig_sub"/>
</dbReference>
<dbReference type="InterPro" id="IPR003598">
    <property type="entry name" value="Ig_sub2"/>
</dbReference>
<dbReference type="InterPro" id="IPR013106">
    <property type="entry name" value="Ig_V-set"/>
</dbReference>
<dbReference type="PANTHER" id="PTHR44888">
    <property type="entry name" value="HEPACAM FAMILY MEMBER 2-RELATED"/>
    <property type="match status" value="1"/>
</dbReference>
<dbReference type="PANTHER" id="PTHR44888:SF2">
    <property type="entry name" value="HEPATIC AND GLIAL CELL ADHESION MOLECULE"/>
    <property type="match status" value="1"/>
</dbReference>
<dbReference type="Pfam" id="PF13927">
    <property type="entry name" value="Ig_3"/>
    <property type="match status" value="1"/>
</dbReference>
<dbReference type="Pfam" id="PF07686">
    <property type="entry name" value="V-set"/>
    <property type="match status" value="1"/>
</dbReference>
<dbReference type="SMART" id="SM00409">
    <property type="entry name" value="IG"/>
    <property type="match status" value="2"/>
</dbReference>
<dbReference type="SMART" id="SM00408">
    <property type="entry name" value="IGc2"/>
    <property type="match status" value="1"/>
</dbReference>
<dbReference type="SUPFAM" id="SSF48726">
    <property type="entry name" value="Immunoglobulin"/>
    <property type="match status" value="2"/>
</dbReference>
<dbReference type="PROSITE" id="PS50835">
    <property type="entry name" value="IG_LIKE"/>
    <property type="match status" value="1"/>
</dbReference>
<feature type="signal peptide" evidence="3">
    <location>
        <begin position="1"/>
        <end position="33"/>
    </location>
</feature>
<feature type="chain" id="PRO_0000298778" description="Hepatic and glial cell adhesion molecule" evidence="3">
    <location>
        <begin position="34"/>
        <end position="418"/>
    </location>
</feature>
<feature type="topological domain" description="Extracellular" evidence="3">
    <location>
        <begin position="34"/>
        <end position="240"/>
    </location>
</feature>
<feature type="transmembrane region" description="Helical" evidence="3">
    <location>
        <begin position="241"/>
        <end position="261"/>
    </location>
</feature>
<feature type="topological domain" description="Cytoplasmic" evidence="3">
    <location>
        <begin position="262"/>
        <end position="418"/>
    </location>
</feature>
<feature type="domain" description="Ig-like V-type" evidence="3">
    <location>
        <begin position="34"/>
        <end position="142"/>
    </location>
</feature>
<feature type="domain" description="Ig-like C2-type" evidence="3">
    <location>
        <begin position="148"/>
        <end position="234"/>
    </location>
</feature>
<feature type="region of interest" description="Disordered" evidence="5">
    <location>
        <begin position="271"/>
        <end position="418"/>
    </location>
</feature>
<feature type="compositionally biased region" description="Basic and acidic residues" evidence="5">
    <location>
        <begin position="287"/>
        <end position="308"/>
    </location>
</feature>
<feature type="compositionally biased region" description="Low complexity" evidence="5">
    <location>
        <begin position="341"/>
        <end position="358"/>
    </location>
</feature>
<feature type="compositionally biased region" description="Low complexity" evidence="5">
    <location>
        <begin position="385"/>
        <end position="396"/>
    </location>
</feature>
<feature type="modified residue" description="Phosphoserine" evidence="10">
    <location>
        <position position="280"/>
    </location>
</feature>
<feature type="modified residue" description="Phosphoserine" evidence="10">
    <location>
        <position position="321"/>
    </location>
</feature>
<feature type="modified residue" description="Phosphoserine" evidence="10">
    <location>
        <position position="352"/>
    </location>
</feature>
<feature type="modified residue" description="Phosphoserine" evidence="10">
    <location>
        <position position="379"/>
    </location>
</feature>
<feature type="glycosylation site" description="N-linked (GlcNAc...) asparagine" evidence="3">
    <location>
        <position position="35"/>
    </location>
</feature>
<feature type="glycosylation site" description="N-linked (GlcNAc...) asparagine" evidence="3">
    <location>
        <position position="138"/>
    </location>
</feature>
<feature type="glycosylation site" description="N-linked (GlcNAc...) asparagine" evidence="3">
    <location>
        <position position="167"/>
    </location>
</feature>
<feature type="glycosylation site" description="N-linked (GlcNAc...) asparagine" evidence="3">
    <location>
        <position position="189"/>
    </location>
</feature>
<feature type="disulfide bond" evidence="4">
    <location>
        <begin position="168"/>
        <end position="217"/>
    </location>
</feature>
<reference key="1">
    <citation type="journal article" date="2009" name="PLoS Biol.">
        <title>Lineage-specific biology revealed by a finished genome assembly of the mouse.</title>
        <authorList>
            <person name="Church D.M."/>
            <person name="Goodstadt L."/>
            <person name="Hillier L.W."/>
            <person name="Zody M.C."/>
            <person name="Goldstein S."/>
            <person name="She X."/>
            <person name="Bult C.J."/>
            <person name="Agarwala R."/>
            <person name="Cherry J.L."/>
            <person name="DiCuccio M."/>
            <person name="Hlavina W."/>
            <person name="Kapustin Y."/>
            <person name="Meric P."/>
            <person name="Maglott D."/>
            <person name="Birtle Z."/>
            <person name="Marques A.C."/>
            <person name="Graves T."/>
            <person name="Zhou S."/>
            <person name="Teague B."/>
            <person name="Potamousis K."/>
            <person name="Churas C."/>
            <person name="Place M."/>
            <person name="Herschleb J."/>
            <person name="Runnheim R."/>
            <person name="Forrest D."/>
            <person name="Amos-Landgraf J."/>
            <person name="Schwartz D.C."/>
            <person name="Cheng Z."/>
            <person name="Lindblad-Toh K."/>
            <person name="Eichler E.E."/>
            <person name="Ponting C.P."/>
        </authorList>
    </citation>
    <scope>NUCLEOTIDE SEQUENCE [LARGE SCALE GENOMIC DNA]</scope>
    <source>
        <strain>C57BL/6J</strain>
    </source>
</reference>
<reference evidence="7 8" key="2">
    <citation type="journal article" date="2004" name="Genome Res.">
        <title>The status, quality, and expansion of the NIH full-length cDNA project: the Mammalian Gene Collection (MGC).</title>
        <authorList>
            <consortium name="The MGC Project Team"/>
        </authorList>
    </citation>
    <scope>NUCLEOTIDE SEQUENCE [LARGE SCALE MRNA] OF 6-418</scope>
    <source>
        <strain evidence="8">C57BL/6J</strain>
        <tissue evidence="8">Brain</tissue>
    </source>
</reference>
<reference key="3">
    <citation type="journal article" date="2007" name="Mol. Cell. Proteomics">
        <title>Qualitative and quantitative analyses of protein phosphorylation in naive and stimulated mouse synaptosomal preparations.</title>
        <authorList>
            <person name="Munton R.P."/>
            <person name="Tweedie-Cullen R."/>
            <person name="Livingstone-Zatchej M."/>
            <person name="Weinandy F."/>
            <person name="Waidelich M."/>
            <person name="Longo D."/>
            <person name="Gehrig P."/>
            <person name="Potthast F."/>
            <person name="Rutishauser D."/>
            <person name="Gerrits B."/>
            <person name="Panse C."/>
            <person name="Schlapbach R."/>
            <person name="Mansuy I.M."/>
        </authorList>
    </citation>
    <scope>IDENTIFICATION BY MASS SPECTROMETRY [LARGE SCALE ANALYSIS]</scope>
    <source>
        <tissue>Brain cortex</tissue>
    </source>
</reference>
<reference key="4">
    <citation type="journal article" date="2010" name="Cell">
        <title>A tissue-specific atlas of mouse protein phosphorylation and expression.</title>
        <authorList>
            <person name="Huttlin E.L."/>
            <person name="Jedrychowski M.P."/>
            <person name="Elias J.E."/>
            <person name="Goswami T."/>
            <person name="Rad R."/>
            <person name="Beausoleil S.A."/>
            <person name="Villen J."/>
            <person name="Haas W."/>
            <person name="Sowa M.E."/>
            <person name="Gygi S.P."/>
        </authorList>
    </citation>
    <scope>PHOSPHORYLATION [LARGE SCALE ANALYSIS] AT SER-280; SER-321; SER-352 AND SER-379</scope>
    <scope>IDENTIFICATION BY MASS SPECTROMETRY [LARGE SCALE ANALYSIS]</scope>
    <source>
        <tissue>Brain</tissue>
    </source>
</reference>
<reference key="5">
    <citation type="journal article" date="2012" name="Neuron">
        <title>GlialCAM, a protein defective in a leukodystrophy, serves as a ClC-2 Cl(-) channel auxiliary subunit.</title>
        <authorList>
            <person name="Jeworutzki E."/>
            <person name="Lopez-Hernandez T."/>
            <person name="Capdevila-Nortes X."/>
            <person name="Sirisi S."/>
            <person name="Bengtsson L."/>
            <person name="Montolio M."/>
            <person name="Zifarelli G."/>
            <person name="Arnedo T."/>
            <person name="Mueller C.S."/>
            <person name="Schulte U."/>
            <person name="Nunes V."/>
            <person name="Martinez A."/>
            <person name="Jentsch T.J."/>
            <person name="Gasull X."/>
            <person name="Pusch M."/>
            <person name="Estevez R."/>
        </authorList>
    </citation>
    <scope>FUNCTION</scope>
    <scope>INTERACTION WITH CLCN2</scope>
    <scope>SUBCELLULAR LOCATION</scope>
</reference>
<evidence type="ECO:0000250" key="1"/>
<evidence type="ECO:0000250" key="2">
    <source>
        <dbReference type="UniProtKB" id="Q14CZ8"/>
    </source>
</evidence>
<evidence type="ECO:0000255" key="3"/>
<evidence type="ECO:0000255" key="4">
    <source>
        <dbReference type="PROSITE-ProRule" id="PRU00114"/>
    </source>
</evidence>
<evidence type="ECO:0000256" key="5">
    <source>
        <dbReference type="SAM" id="MobiDB-lite"/>
    </source>
</evidence>
<evidence type="ECO:0000269" key="6">
    <source>
    </source>
</evidence>
<evidence type="ECO:0000305" key="7"/>
<evidence type="ECO:0000312" key="8">
    <source>
        <dbReference type="EMBL" id="AAH82537.1"/>
    </source>
</evidence>
<evidence type="ECO:0000312" key="9">
    <source>
        <dbReference type="MGI" id="MGI:1920177"/>
    </source>
</evidence>
<evidence type="ECO:0007744" key="10">
    <source>
    </source>
</evidence>
<accession>Q640R3</accession>
<organism>
    <name type="scientific">Mus musculus</name>
    <name type="common">Mouse</name>
    <dbReference type="NCBI Taxonomy" id="10090"/>
    <lineage>
        <taxon>Eukaryota</taxon>
        <taxon>Metazoa</taxon>
        <taxon>Chordata</taxon>
        <taxon>Craniata</taxon>
        <taxon>Vertebrata</taxon>
        <taxon>Euteleostomi</taxon>
        <taxon>Mammalia</taxon>
        <taxon>Eutheria</taxon>
        <taxon>Euarchontoglires</taxon>
        <taxon>Glires</taxon>
        <taxon>Rodentia</taxon>
        <taxon>Myomorpha</taxon>
        <taxon>Muroidea</taxon>
        <taxon>Muridae</taxon>
        <taxon>Murinae</taxon>
        <taxon>Mus</taxon>
        <taxon>Mus</taxon>
    </lineage>
</organism>
<protein>
    <recommendedName>
        <fullName>Hepatic and glial cell adhesion molecule</fullName>
        <shortName>glialCAM</shortName>
    </recommendedName>
    <alternativeName>
        <fullName>Hepatocyte cell adhesion molecule</fullName>
        <shortName>Protein hepaCAM</shortName>
    </alternativeName>
</protein>
<proteinExistence type="evidence at protein level"/>